<name>RL5_RUEPO</name>
<organism>
    <name type="scientific">Ruegeria pomeroyi (strain ATCC 700808 / DSM 15171 / DSS-3)</name>
    <name type="common">Silicibacter pomeroyi</name>
    <dbReference type="NCBI Taxonomy" id="246200"/>
    <lineage>
        <taxon>Bacteria</taxon>
        <taxon>Pseudomonadati</taxon>
        <taxon>Pseudomonadota</taxon>
        <taxon>Alphaproteobacteria</taxon>
        <taxon>Rhodobacterales</taxon>
        <taxon>Roseobacteraceae</taxon>
        <taxon>Ruegeria</taxon>
    </lineage>
</organism>
<evidence type="ECO:0000255" key="1">
    <source>
        <dbReference type="HAMAP-Rule" id="MF_01333"/>
    </source>
</evidence>
<evidence type="ECO:0000305" key="2"/>
<reference key="1">
    <citation type="journal article" date="2004" name="Nature">
        <title>Genome sequence of Silicibacter pomeroyi reveals adaptations to the marine environment.</title>
        <authorList>
            <person name="Moran M.A."/>
            <person name="Buchan A."/>
            <person name="Gonzalez J.M."/>
            <person name="Heidelberg J.F."/>
            <person name="Whitman W.B."/>
            <person name="Kiene R.P."/>
            <person name="Henriksen J.R."/>
            <person name="King G.M."/>
            <person name="Belas R."/>
            <person name="Fuqua C."/>
            <person name="Brinkac L.M."/>
            <person name="Lewis M."/>
            <person name="Johri S."/>
            <person name="Weaver B."/>
            <person name="Pai G."/>
            <person name="Eisen J.A."/>
            <person name="Rahe E."/>
            <person name="Sheldon W.M."/>
            <person name="Ye W."/>
            <person name="Miller T.R."/>
            <person name="Carlton J."/>
            <person name="Rasko D.A."/>
            <person name="Paulsen I.T."/>
            <person name="Ren Q."/>
            <person name="Daugherty S.C."/>
            <person name="DeBoy R.T."/>
            <person name="Dodson R.J."/>
            <person name="Durkin A.S."/>
            <person name="Madupu R."/>
            <person name="Nelson W.C."/>
            <person name="Sullivan S.A."/>
            <person name="Rosovitz M.J."/>
            <person name="Haft D.H."/>
            <person name="Selengut J."/>
            <person name="Ward N."/>
        </authorList>
    </citation>
    <scope>NUCLEOTIDE SEQUENCE [LARGE SCALE GENOMIC DNA]</scope>
    <source>
        <strain>ATCC 700808 / DSM 15171 / DSS-3</strain>
    </source>
</reference>
<reference key="2">
    <citation type="journal article" date="2014" name="Stand. Genomic Sci.">
        <title>An updated genome annotation for the model marine bacterium Ruegeria pomeroyi DSS-3.</title>
        <authorList>
            <person name="Rivers A.R."/>
            <person name="Smith C.B."/>
            <person name="Moran M.A."/>
        </authorList>
    </citation>
    <scope>GENOME REANNOTATION</scope>
    <source>
        <strain>ATCC 700808 / DSM 15171 / DSS-3</strain>
    </source>
</reference>
<keyword id="KW-1185">Reference proteome</keyword>
<keyword id="KW-0687">Ribonucleoprotein</keyword>
<keyword id="KW-0689">Ribosomal protein</keyword>
<keyword id="KW-0694">RNA-binding</keyword>
<keyword id="KW-0699">rRNA-binding</keyword>
<keyword id="KW-0820">tRNA-binding</keyword>
<feature type="chain" id="PRO_0000243065" description="Large ribosomal subunit protein uL5">
    <location>
        <begin position="1"/>
        <end position="186"/>
    </location>
</feature>
<protein>
    <recommendedName>
        <fullName evidence="1">Large ribosomal subunit protein uL5</fullName>
    </recommendedName>
    <alternativeName>
        <fullName evidence="2">50S ribosomal protein L5</fullName>
    </alternativeName>
</protein>
<accession>Q5LW46</accession>
<sequence>MLDAANYTPRLKAQYAETIRAALKEEFGYKNDMMIPKLEKIVLNIGCGAEAVKDSKKAKSAQEDLSKIAGQKAITTTAKKSIAGFRVREDMPMGAKVTLRGERMYEFLDRLITIAMPRIRDFRGVKPSFDGRGNFAMGIKEHIVFPEIDFDKVDEVWGMDIVIATTAKTDAEAKSLLKHFNMPFNA</sequence>
<proteinExistence type="inferred from homology"/>
<dbReference type="EMBL" id="CP000031">
    <property type="protein sequence ID" value="AAV93814.1"/>
    <property type="molecule type" value="Genomic_DNA"/>
</dbReference>
<dbReference type="RefSeq" id="WP_011046256.1">
    <property type="nucleotide sequence ID" value="NC_003911.12"/>
</dbReference>
<dbReference type="SMR" id="Q5LW46"/>
<dbReference type="STRING" id="246200.SPO0497"/>
<dbReference type="PaxDb" id="246200-SPO0497"/>
<dbReference type="KEGG" id="sil:SPO0497"/>
<dbReference type="eggNOG" id="COG0094">
    <property type="taxonomic scope" value="Bacteria"/>
</dbReference>
<dbReference type="HOGENOM" id="CLU_061015_2_1_5"/>
<dbReference type="OrthoDB" id="9806626at2"/>
<dbReference type="Proteomes" id="UP000001023">
    <property type="component" value="Chromosome"/>
</dbReference>
<dbReference type="GO" id="GO:1990904">
    <property type="term" value="C:ribonucleoprotein complex"/>
    <property type="evidence" value="ECO:0007669"/>
    <property type="project" value="UniProtKB-KW"/>
</dbReference>
<dbReference type="GO" id="GO:0005840">
    <property type="term" value="C:ribosome"/>
    <property type="evidence" value="ECO:0007669"/>
    <property type="project" value="UniProtKB-KW"/>
</dbReference>
<dbReference type="GO" id="GO:0019843">
    <property type="term" value="F:rRNA binding"/>
    <property type="evidence" value="ECO:0007669"/>
    <property type="project" value="UniProtKB-UniRule"/>
</dbReference>
<dbReference type="GO" id="GO:0003735">
    <property type="term" value="F:structural constituent of ribosome"/>
    <property type="evidence" value="ECO:0007669"/>
    <property type="project" value="InterPro"/>
</dbReference>
<dbReference type="GO" id="GO:0000049">
    <property type="term" value="F:tRNA binding"/>
    <property type="evidence" value="ECO:0007669"/>
    <property type="project" value="UniProtKB-UniRule"/>
</dbReference>
<dbReference type="GO" id="GO:0006412">
    <property type="term" value="P:translation"/>
    <property type="evidence" value="ECO:0007669"/>
    <property type="project" value="UniProtKB-UniRule"/>
</dbReference>
<dbReference type="FunFam" id="3.30.1440.10:FF:000001">
    <property type="entry name" value="50S ribosomal protein L5"/>
    <property type="match status" value="1"/>
</dbReference>
<dbReference type="Gene3D" id="3.30.1440.10">
    <property type="match status" value="1"/>
</dbReference>
<dbReference type="HAMAP" id="MF_01333_B">
    <property type="entry name" value="Ribosomal_uL5_B"/>
    <property type="match status" value="1"/>
</dbReference>
<dbReference type="InterPro" id="IPR002132">
    <property type="entry name" value="Ribosomal_uL5"/>
</dbReference>
<dbReference type="InterPro" id="IPR020930">
    <property type="entry name" value="Ribosomal_uL5_bac-type"/>
</dbReference>
<dbReference type="InterPro" id="IPR031309">
    <property type="entry name" value="Ribosomal_uL5_C"/>
</dbReference>
<dbReference type="InterPro" id="IPR020929">
    <property type="entry name" value="Ribosomal_uL5_CS"/>
</dbReference>
<dbReference type="InterPro" id="IPR022803">
    <property type="entry name" value="Ribosomal_uL5_dom_sf"/>
</dbReference>
<dbReference type="InterPro" id="IPR031310">
    <property type="entry name" value="Ribosomal_uL5_N"/>
</dbReference>
<dbReference type="NCBIfam" id="NF000585">
    <property type="entry name" value="PRK00010.1"/>
    <property type="match status" value="1"/>
</dbReference>
<dbReference type="PANTHER" id="PTHR11994">
    <property type="entry name" value="60S RIBOSOMAL PROTEIN L11-RELATED"/>
    <property type="match status" value="1"/>
</dbReference>
<dbReference type="Pfam" id="PF00281">
    <property type="entry name" value="Ribosomal_L5"/>
    <property type="match status" value="1"/>
</dbReference>
<dbReference type="Pfam" id="PF00673">
    <property type="entry name" value="Ribosomal_L5_C"/>
    <property type="match status" value="1"/>
</dbReference>
<dbReference type="PIRSF" id="PIRSF002161">
    <property type="entry name" value="Ribosomal_L5"/>
    <property type="match status" value="1"/>
</dbReference>
<dbReference type="SUPFAM" id="SSF55282">
    <property type="entry name" value="RL5-like"/>
    <property type="match status" value="1"/>
</dbReference>
<dbReference type="PROSITE" id="PS00358">
    <property type="entry name" value="RIBOSOMAL_L5"/>
    <property type="match status" value="1"/>
</dbReference>
<comment type="function">
    <text evidence="1">This is one of the proteins that bind and probably mediate the attachment of the 5S RNA into the large ribosomal subunit, where it forms part of the central protuberance. In the 70S ribosome it contacts protein S13 of the 30S subunit (bridge B1b), connecting the 2 subunits; this bridge is implicated in subunit movement. Contacts the P site tRNA; the 5S rRNA and some of its associated proteins might help stabilize positioning of ribosome-bound tRNAs.</text>
</comment>
<comment type="subunit">
    <text evidence="1">Part of the 50S ribosomal subunit; part of the 5S rRNA/L5/L18/L25 subcomplex. Contacts the 5S rRNA and the P site tRNA. Forms a bridge to the 30S subunit in the 70S ribosome.</text>
</comment>
<comment type="similarity">
    <text evidence="1">Belongs to the universal ribosomal protein uL5 family.</text>
</comment>
<gene>
    <name evidence="1" type="primary">rplE</name>
    <name type="ordered locus">SPO0497</name>
</gene>